<gene>
    <name type="primary">RSPRY1</name>
    <name type="ORF">QtsA-15931</name>
</gene>
<reference key="1">
    <citation type="journal article" date="2002" name="BMC Genomics">
        <title>Cynomolgus monkey testicular cDNAs for discovery of novel human genes in the human genome sequence.</title>
        <authorList>
            <person name="Osada N."/>
            <person name="Hida M."/>
            <person name="Kusuda J."/>
            <person name="Tanuma R."/>
            <person name="Hirata M."/>
            <person name="Suto Y."/>
            <person name="Hirai M."/>
            <person name="Terao K."/>
            <person name="Sugano S."/>
            <person name="Hashimoto K."/>
        </authorList>
    </citation>
    <scope>NUCLEOTIDE SEQUENCE [LARGE SCALE MRNA]</scope>
    <source>
        <tissue>Testis</tissue>
    </source>
</reference>
<organism>
    <name type="scientific">Macaca fascicularis</name>
    <name type="common">Crab-eating macaque</name>
    <name type="synonym">Cynomolgus monkey</name>
    <dbReference type="NCBI Taxonomy" id="9541"/>
    <lineage>
        <taxon>Eukaryota</taxon>
        <taxon>Metazoa</taxon>
        <taxon>Chordata</taxon>
        <taxon>Craniata</taxon>
        <taxon>Vertebrata</taxon>
        <taxon>Euteleostomi</taxon>
        <taxon>Mammalia</taxon>
        <taxon>Eutheria</taxon>
        <taxon>Euarchontoglires</taxon>
        <taxon>Primates</taxon>
        <taxon>Haplorrhini</taxon>
        <taxon>Catarrhini</taxon>
        <taxon>Cercopithecidae</taxon>
        <taxon>Cercopithecinae</taxon>
        <taxon>Macaca</taxon>
    </lineage>
</organism>
<evidence type="ECO:0000250" key="1">
    <source>
        <dbReference type="UniProtKB" id="Q8BVR6"/>
    </source>
</evidence>
<evidence type="ECO:0000255" key="2"/>
<evidence type="ECO:0000255" key="3">
    <source>
        <dbReference type="PROSITE-ProRule" id="PRU00175"/>
    </source>
</evidence>
<evidence type="ECO:0000255" key="4">
    <source>
        <dbReference type="PROSITE-ProRule" id="PRU00548"/>
    </source>
</evidence>
<evidence type="ECO:0000256" key="5">
    <source>
        <dbReference type="SAM" id="MobiDB-lite"/>
    </source>
</evidence>
<evidence type="ECO:0000305" key="6"/>
<dbReference type="EMBL" id="AB072745">
    <property type="protein sequence ID" value="BAB69714.1"/>
    <property type="molecule type" value="mRNA"/>
</dbReference>
<dbReference type="RefSeq" id="NP_001306505.1">
    <property type="nucleotide sequence ID" value="NM_001319576.1"/>
</dbReference>
<dbReference type="SMR" id="Q95LP3"/>
<dbReference type="STRING" id="9541.ENSMFAP00000037367"/>
<dbReference type="GlyCosmos" id="Q95LP3">
    <property type="glycosylation" value="1 site, No reported glycans"/>
</dbReference>
<dbReference type="eggNOG" id="KOG2242">
    <property type="taxonomic scope" value="Eukaryota"/>
</dbReference>
<dbReference type="Proteomes" id="UP000233100">
    <property type="component" value="Unplaced"/>
</dbReference>
<dbReference type="GO" id="GO:0005737">
    <property type="term" value="C:cytoplasm"/>
    <property type="evidence" value="ECO:0007669"/>
    <property type="project" value="TreeGrafter"/>
</dbReference>
<dbReference type="GO" id="GO:0005576">
    <property type="term" value="C:extracellular region"/>
    <property type="evidence" value="ECO:0007669"/>
    <property type="project" value="UniProtKB-SubCell"/>
</dbReference>
<dbReference type="GO" id="GO:0004842">
    <property type="term" value="F:ubiquitin-protein transferase activity"/>
    <property type="evidence" value="ECO:0007669"/>
    <property type="project" value="InterPro"/>
</dbReference>
<dbReference type="GO" id="GO:0008270">
    <property type="term" value="F:zinc ion binding"/>
    <property type="evidence" value="ECO:0007669"/>
    <property type="project" value="UniProtKB-KW"/>
</dbReference>
<dbReference type="GO" id="GO:0051603">
    <property type="term" value="P:proteolysis involved in protein catabolic process"/>
    <property type="evidence" value="ECO:0007669"/>
    <property type="project" value="TreeGrafter"/>
</dbReference>
<dbReference type="CDD" id="cd16566">
    <property type="entry name" value="RING-HC_RSPRY1"/>
    <property type="match status" value="1"/>
</dbReference>
<dbReference type="CDD" id="cd12883">
    <property type="entry name" value="SPRY_RING"/>
    <property type="match status" value="1"/>
</dbReference>
<dbReference type="Gene3D" id="2.60.120.920">
    <property type="match status" value="1"/>
</dbReference>
<dbReference type="Gene3D" id="3.30.40.10">
    <property type="entry name" value="Zinc/RING finger domain, C3HC4 (zinc finger)"/>
    <property type="match status" value="1"/>
</dbReference>
<dbReference type="InterPro" id="IPR016024">
    <property type="entry name" value="ARM-type_fold"/>
</dbReference>
<dbReference type="InterPro" id="IPR001870">
    <property type="entry name" value="B30.2/SPRY"/>
</dbReference>
<dbReference type="InterPro" id="IPR043136">
    <property type="entry name" value="B30.2/SPRY_sf"/>
</dbReference>
<dbReference type="InterPro" id="IPR013320">
    <property type="entry name" value="ConA-like_dom_sf"/>
</dbReference>
<dbReference type="InterPro" id="IPR045129">
    <property type="entry name" value="RNF123/RSPRY1-like"/>
</dbReference>
<dbReference type="InterPro" id="IPR003877">
    <property type="entry name" value="SPRY_dom"/>
</dbReference>
<dbReference type="InterPro" id="IPR035774">
    <property type="entry name" value="SPRY_RSPRY1"/>
</dbReference>
<dbReference type="InterPro" id="IPR001841">
    <property type="entry name" value="Znf_RING"/>
</dbReference>
<dbReference type="InterPro" id="IPR013083">
    <property type="entry name" value="Znf_RING/FYVE/PHD"/>
</dbReference>
<dbReference type="PANTHER" id="PTHR13363:SF6">
    <property type="entry name" value="RING FINGER AND SPRY DOMAIN-CONTAINING PROTEIN 1"/>
    <property type="match status" value="1"/>
</dbReference>
<dbReference type="PANTHER" id="PTHR13363">
    <property type="entry name" value="RING FINGER AND SRY DOMAIN-CONTAINING"/>
    <property type="match status" value="1"/>
</dbReference>
<dbReference type="Pfam" id="PF00622">
    <property type="entry name" value="SPRY"/>
    <property type="match status" value="1"/>
</dbReference>
<dbReference type="Pfam" id="PF13920">
    <property type="entry name" value="zf-C3HC4_3"/>
    <property type="match status" value="1"/>
</dbReference>
<dbReference type="SMART" id="SM00184">
    <property type="entry name" value="RING"/>
    <property type="match status" value="1"/>
</dbReference>
<dbReference type="SMART" id="SM00449">
    <property type="entry name" value="SPRY"/>
    <property type="match status" value="1"/>
</dbReference>
<dbReference type="SUPFAM" id="SSF48371">
    <property type="entry name" value="ARM repeat"/>
    <property type="match status" value="1"/>
</dbReference>
<dbReference type="SUPFAM" id="SSF49899">
    <property type="entry name" value="Concanavalin A-like lectins/glucanases"/>
    <property type="match status" value="1"/>
</dbReference>
<dbReference type="SUPFAM" id="SSF57850">
    <property type="entry name" value="RING/U-box"/>
    <property type="match status" value="1"/>
</dbReference>
<dbReference type="PROSITE" id="PS50188">
    <property type="entry name" value="B302_SPRY"/>
    <property type="match status" value="1"/>
</dbReference>
<dbReference type="PROSITE" id="PS50089">
    <property type="entry name" value="ZF_RING_2"/>
    <property type="match status" value="1"/>
</dbReference>
<sequence length="576" mass="64259">MIVLGWAVFLASRSLGQGLLLTLEEHIAHFLGTRGATTTMGNSCICRDDSGTDDSVDTQQQQAENSAVPTADTRSQPRDPVRPPRRGRGPHEPRRKKQNVDGLVLDTLAVIRTLVDNDQEPPYSMITLHEMAETDEGWLDVVQSLIRVIPLEDPLGPAVITLLLDECPLPTKDALQKLTEILNLNGEVACQDSGHPAKHRNTSAVLGCLAEKLAGPASIGLLSPGILEYLLQCLKLQSHPTVMLFALIALEKFAQTSENKLTISESSISDRLVTLESWANDPDYLKRQVGFCAQWSLDNLFLKEGRQLTYEKVNLSSIRAMLNSNDVSEYLKISPHGLEARCDASSFESVRCTFCVDAGVWYYEVTVVTSGVMQIGWATRDSKFLNHEGYGIGDDEYSCAYDGCRQLIWYNARSKPHIHPCWKEGDTVGFLLDLNEKQMIFFLNGNQLPPEKQVFSSTISGFFAAASFMSYQQCEFNFGAKPFKYPPSMKFSTFNDYAFLTAEEKIILPRHRRLALLKQVSIRENCCSLCCDEVADTQLKPCGHSDLCMDCALQLETCPLCRKEIVSRIRQISHIS</sequence>
<comment type="subcellular location">
    <subcellularLocation>
        <location evidence="6">Secreted</location>
    </subcellularLocation>
</comment>
<protein>
    <recommendedName>
        <fullName>RING finger and SPRY domain-containing protein 1</fullName>
    </recommendedName>
</protein>
<proteinExistence type="evidence at transcript level"/>
<feature type="signal peptide" evidence="2">
    <location>
        <begin position="1"/>
        <end position="16"/>
    </location>
</feature>
<feature type="chain" id="PRO_0000278787" description="RING finger and SPRY domain-containing protein 1">
    <location>
        <begin position="17"/>
        <end position="576"/>
    </location>
</feature>
<feature type="domain" description="B30.2/SPRY" evidence="4">
    <location>
        <begin position="300"/>
        <end position="483"/>
    </location>
</feature>
<feature type="zinc finger region" description="RING-type" evidence="3">
    <location>
        <begin position="527"/>
        <end position="562"/>
    </location>
</feature>
<feature type="region of interest" description="Disordered" evidence="5">
    <location>
        <begin position="50"/>
        <end position="99"/>
    </location>
</feature>
<feature type="compositionally biased region" description="Polar residues" evidence="5">
    <location>
        <begin position="57"/>
        <end position="68"/>
    </location>
</feature>
<feature type="compositionally biased region" description="Basic residues" evidence="5">
    <location>
        <begin position="83"/>
        <end position="97"/>
    </location>
</feature>
<feature type="modified residue" description="Phosphoserine" evidence="1">
    <location>
        <position position="50"/>
    </location>
</feature>
<feature type="glycosylation site" description="N-linked (GlcNAc...) asparagine" evidence="2">
    <location>
        <position position="314"/>
    </location>
</feature>
<accession>Q95LP3</accession>
<name>RSPRY_MACFA</name>
<keyword id="KW-0325">Glycoprotein</keyword>
<keyword id="KW-0479">Metal-binding</keyword>
<keyword id="KW-0597">Phosphoprotein</keyword>
<keyword id="KW-1185">Reference proteome</keyword>
<keyword id="KW-0964">Secreted</keyword>
<keyword id="KW-0732">Signal</keyword>
<keyword id="KW-0862">Zinc</keyword>
<keyword id="KW-0863">Zinc-finger</keyword>